<keyword id="KW-0067">ATP-binding</keyword>
<keyword id="KW-0903">Direct protein sequencing</keyword>
<keyword id="KW-0520">NAD</keyword>
<keyword id="KW-0547">Nucleotide-binding</keyword>
<keyword id="KW-0548">Nucleotidyltransferase</keyword>
<keyword id="KW-0539">Nucleus</keyword>
<keyword id="KW-0597">Phosphoprotein</keyword>
<keyword id="KW-0662">Pyridine nucleotide biosynthesis</keyword>
<keyword id="KW-1185">Reference proteome</keyword>
<keyword id="KW-0808">Transferase</keyword>
<sequence>MDPTKAPDFKPPQPNEELQPPPDPTHTIPKSGPIVPYVLADYNSSIDAPFNLDIYKTLSSRKKNANSSNRMDHIPLNTSDFQPLSRDVSSEEESEGQSNGIDATLQDVTMTGNLGVLKSQIADLEEVPHTIVRQARTIEDYEFPVHRLTKKLQDPEKLPLIIVACGSFSPITYLHLRMFEMALDDINEQTRFEVVGGYFSPVSDNYQKRGLAPAYHRVRMCELACERTSSWLMVDAWESLQSSYTRTAKVLDHFNHEINIKRGGIMTVDGEKMGVKIMLLAGGDLIESMGEPHVWADSDLHHILGNYGCLIVERTGSDVRSFLLSHDIMYEHRRNILIIKQLIYNDISSTKVRLFIRRGMSVQYLLPNSVIRYIQEYNLYINQSEPVKQVLDSKE</sequence>
<evidence type="ECO:0000250" key="1">
    <source>
        <dbReference type="UniProtKB" id="Q06178"/>
    </source>
</evidence>
<evidence type="ECO:0000250" key="2">
    <source>
        <dbReference type="UniProtKB" id="Q96T66"/>
    </source>
</evidence>
<evidence type="ECO:0000256" key="3">
    <source>
        <dbReference type="SAM" id="MobiDB-lite"/>
    </source>
</evidence>
<evidence type="ECO:0000269" key="4">
    <source>
    </source>
</evidence>
<evidence type="ECO:0000269" key="5">
    <source>
    </source>
</evidence>
<evidence type="ECO:0000269" key="6">
    <source>
    </source>
</evidence>
<evidence type="ECO:0000269" key="7">
    <source>
    </source>
</evidence>
<evidence type="ECO:0000303" key="8">
    <source>
    </source>
</evidence>
<evidence type="ECO:0000303" key="9">
    <source>
    </source>
</evidence>
<evidence type="ECO:0000305" key="10"/>
<evidence type="ECO:0000305" key="11">
    <source>
    </source>
</evidence>
<evidence type="ECO:0000305" key="12">
    <source>
    </source>
</evidence>
<evidence type="ECO:0000312" key="13">
    <source>
        <dbReference type="SGD" id="S000003242"/>
    </source>
</evidence>
<evidence type="ECO:0007744" key="14">
    <source>
    </source>
</evidence>
<evidence type="ECO:0007744" key="15">
    <source>
    </source>
</evidence>
<comment type="function">
    <text evidence="1 4 5">Catalyzes the formation of NAD(+) from nicotinamide mononucleotide (NMN) and ATP (PubMed:12597897). Can also use the deamidated form; nicotinic acid mononucleotide (NaMN) as substrate to form deamido-NAD(+) (NaAD). Key enzyme in both de novo and salvage pathways for NAD(+) biosynthesis (By similarity). Predominantly acts in the salvage pathways via NMN (PubMed:11884393).</text>
</comment>
<comment type="catalytic activity">
    <reaction evidence="1 5">
        <text>beta-nicotinamide D-ribonucleotide + ATP + H(+) = diphosphate + NAD(+)</text>
        <dbReference type="Rhea" id="RHEA:21360"/>
        <dbReference type="ChEBI" id="CHEBI:14649"/>
        <dbReference type="ChEBI" id="CHEBI:15378"/>
        <dbReference type="ChEBI" id="CHEBI:30616"/>
        <dbReference type="ChEBI" id="CHEBI:33019"/>
        <dbReference type="ChEBI" id="CHEBI:57540"/>
        <dbReference type="EC" id="2.7.7.1"/>
    </reaction>
</comment>
<comment type="catalytic activity">
    <reaction evidence="11">
        <text>nicotinate beta-D-ribonucleotide + ATP + H(+) = deamido-NAD(+) + diphosphate</text>
        <dbReference type="Rhea" id="RHEA:22860"/>
        <dbReference type="ChEBI" id="CHEBI:15378"/>
        <dbReference type="ChEBI" id="CHEBI:30616"/>
        <dbReference type="ChEBI" id="CHEBI:33019"/>
        <dbReference type="ChEBI" id="CHEBI:57502"/>
        <dbReference type="ChEBI" id="CHEBI:58437"/>
        <dbReference type="EC" id="2.7.7.18"/>
    </reaction>
</comment>
<comment type="cofactor">
    <cofactor evidence="5">
        <name>Co(2+)</name>
        <dbReference type="ChEBI" id="CHEBI:48828"/>
    </cofactor>
    <text evidence="5">Divalent metal cation.</text>
</comment>
<comment type="biophysicochemical properties">
    <kinetics>
        <KM evidence="5">1.4 mM for ATP</KM>
        <KM evidence="5">0.13 mM for NMN</KM>
        <KM evidence="5">0.023 mM for NAD(+)</KM>
        <KM evidence="5">5 mM for diphosphate</KM>
    </kinetics>
    <phDependence>
        <text evidence="5">Optimum pH is 6.5-8.0.</text>
    </phDependence>
</comment>
<comment type="pathway">
    <text evidence="11">Cofactor biosynthesis; NAD(+) biosynthesis; deamido-NAD(+) from nicotinate D-ribonucleotide: step 1/1.</text>
</comment>
<comment type="pathway">
    <text evidence="12">Cofactor biosynthesis; NAD(+) biosynthesis; NAD(+) from nicotinamide D-ribonucleotide: step 1/1.</text>
</comment>
<comment type="interaction">
    <interactant intactId="EBI-23073">
        <id>P53204</id>
    </interactant>
    <interactant intactId="EBI-11803">
        <id>Q06178</id>
        <label>NMA1</label>
    </interactant>
    <organismsDiffer>false</organismsDiffer>
    <experiments>7</experiments>
</comment>
<comment type="subcellular location">
    <subcellularLocation>
        <location evidence="4">Nucleus</location>
    </subcellularLocation>
</comment>
<comment type="induction">
    <text evidence="7">Expression is slightly induced in late log phase.</text>
</comment>
<comment type="miscellaneous">
    <text evidence="6">Present with 1430 molecules/cell in log phase SD medium.</text>
</comment>
<comment type="similarity">
    <text evidence="10">Belongs to the eukaryotic NMN adenylyltransferase family.</text>
</comment>
<protein>
    <recommendedName>
        <fullName evidence="10">Nicotinamide/nicotinic acid mononucleotide adenylyltransferase 2</fullName>
        <shortName>NMN/NaMN adenylyltransferase 2</shortName>
        <ecNumber evidence="5">2.7.7.1</ecNumber>
        <ecNumber evidence="11">2.7.7.18</ecNumber>
    </recommendedName>
    <alternativeName>
        <fullName>NAD(+) diphosphorylase 2</fullName>
    </alternativeName>
    <alternativeName>
        <fullName>NAD(+) pyrophosphorylase 2</fullName>
    </alternativeName>
    <alternativeName>
        <fullName evidence="9">Nicotinamide-nucleotide adenylyltransferase 2</fullName>
        <shortName>NMN adenylyltransferase 2</shortName>
        <shortName>NMNAT 2</shortName>
    </alternativeName>
    <alternativeName>
        <fullName evidence="8">Nicotinate-nucleotide adenylyltransferase 2</fullName>
        <shortName>NaMN adenylyltransferase 2</shortName>
        <shortName>NaMNAT 2</shortName>
    </alternativeName>
</protein>
<proteinExistence type="evidence at protein level"/>
<feature type="chain" id="PRO_0000135019" description="Nicotinamide/nicotinic acid mononucleotide adenylyltransferase 2">
    <location>
        <begin position="1"/>
        <end position="395"/>
    </location>
</feature>
<feature type="region of interest" description="Disordered" evidence="3">
    <location>
        <begin position="1"/>
        <end position="34"/>
    </location>
</feature>
<feature type="region of interest" description="Disordered" evidence="3">
    <location>
        <begin position="62"/>
        <end position="102"/>
    </location>
</feature>
<feature type="compositionally biased region" description="Pro residues" evidence="3">
    <location>
        <begin position="9"/>
        <end position="24"/>
    </location>
</feature>
<feature type="binding site" evidence="2">
    <location>
        <position position="167"/>
    </location>
    <ligand>
        <name>NAD(+)</name>
        <dbReference type="ChEBI" id="CHEBI:57540"/>
    </ligand>
</feature>
<feature type="binding site" evidence="2">
    <location>
        <position position="168"/>
    </location>
    <ligand>
        <name>NAD(+)</name>
        <dbReference type="ChEBI" id="CHEBI:57540"/>
    </ligand>
</feature>
<feature type="binding site" description="in other chain" evidence="2">
    <location>
        <position position="175"/>
    </location>
    <ligand>
        <name>ATP</name>
        <dbReference type="ChEBI" id="CHEBI:30616"/>
        <note>ligand shared between dimeric partners</note>
    </ligand>
</feature>
<feature type="binding site" description="in other chain" evidence="2">
    <location>
        <position position="209"/>
    </location>
    <ligand>
        <name>ATP</name>
        <dbReference type="ChEBI" id="CHEBI:30616"/>
        <note>ligand shared between dimeric partners</note>
    </ligand>
</feature>
<feature type="binding site" evidence="2">
    <location>
        <position position="247"/>
    </location>
    <ligand>
        <name>NAD(+)</name>
        <dbReference type="ChEBI" id="CHEBI:57540"/>
    </ligand>
</feature>
<feature type="binding site" evidence="2">
    <location>
        <position position="282"/>
    </location>
    <ligand>
        <name>NAD(+)</name>
        <dbReference type="ChEBI" id="CHEBI:57540"/>
    </ligand>
</feature>
<feature type="binding site" evidence="2">
    <location>
        <position position="284"/>
    </location>
    <ligand>
        <name>NAD(+)</name>
        <dbReference type="ChEBI" id="CHEBI:57540"/>
    </ligand>
</feature>
<feature type="binding site" evidence="2">
    <location>
        <position position="295"/>
    </location>
    <ligand>
        <name>NAD(+)</name>
        <dbReference type="ChEBI" id="CHEBI:57540"/>
    </ligand>
</feature>
<feature type="binding site" evidence="2">
    <location>
        <position position="314"/>
    </location>
    <ligand>
        <name>NAD(+)</name>
        <dbReference type="ChEBI" id="CHEBI:57540"/>
    </ligand>
</feature>
<feature type="binding site" evidence="2">
    <location>
        <position position="345"/>
    </location>
    <ligand>
        <name>NAD(+)</name>
        <dbReference type="ChEBI" id="CHEBI:57540"/>
    </ligand>
</feature>
<feature type="binding site" description="in other chain" evidence="2">
    <location>
        <begin position="350"/>
        <end position="353"/>
    </location>
    <ligand>
        <name>ATP</name>
        <dbReference type="ChEBI" id="CHEBI:30616"/>
        <note>ligand shared between dimeric partners</note>
    </ligand>
</feature>
<feature type="modified residue" description="Phosphoserine" evidence="14 15">
    <location>
        <position position="85"/>
    </location>
</feature>
<feature type="modified residue" description="Phosphoserine" evidence="15">
    <location>
        <position position="89"/>
    </location>
</feature>
<feature type="modified residue" description="Phosphoserine" evidence="15">
    <location>
        <position position="90"/>
    </location>
</feature>
<reference key="1">
    <citation type="journal article" date="1997" name="Nature">
        <title>The nucleotide sequence of Saccharomyces cerevisiae chromosome VII.</title>
        <authorList>
            <person name="Tettelin H."/>
            <person name="Agostoni-Carbone M.L."/>
            <person name="Albermann K."/>
            <person name="Albers M."/>
            <person name="Arroyo J."/>
            <person name="Backes U."/>
            <person name="Barreiros T."/>
            <person name="Bertani I."/>
            <person name="Bjourson A.J."/>
            <person name="Brueckner M."/>
            <person name="Bruschi C.V."/>
            <person name="Carignani G."/>
            <person name="Castagnoli L."/>
            <person name="Cerdan E."/>
            <person name="Clemente M.L."/>
            <person name="Coblenz A."/>
            <person name="Coglievina M."/>
            <person name="Coissac E."/>
            <person name="Defoor E."/>
            <person name="Del Bino S."/>
            <person name="Delius H."/>
            <person name="Delneri D."/>
            <person name="de Wergifosse P."/>
            <person name="Dujon B."/>
            <person name="Durand P."/>
            <person name="Entian K.-D."/>
            <person name="Eraso P."/>
            <person name="Escribano V."/>
            <person name="Fabiani L."/>
            <person name="Fartmann B."/>
            <person name="Feroli F."/>
            <person name="Feuermann M."/>
            <person name="Frontali L."/>
            <person name="Garcia-Gonzalez M."/>
            <person name="Garcia-Saez M.I."/>
            <person name="Goffeau A."/>
            <person name="Guerreiro P."/>
            <person name="Hani J."/>
            <person name="Hansen M."/>
            <person name="Hebling U."/>
            <person name="Hernandez K."/>
            <person name="Heumann K."/>
            <person name="Hilger F."/>
            <person name="Hofmann B."/>
            <person name="Indge K.J."/>
            <person name="James C.M."/>
            <person name="Klima R."/>
            <person name="Koetter P."/>
            <person name="Kramer B."/>
            <person name="Kramer W."/>
            <person name="Lauquin G."/>
            <person name="Leuther H."/>
            <person name="Louis E.J."/>
            <person name="Maillier E."/>
            <person name="Marconi A."/>
            <person name="Martegani E."/>
            <person name="Mazon M.J."/>
            <person name="Mazzoni C."/>
            <person name="McReynolds A.D.K."/>
            <person name="Melchioretto P."/>
            <person name="Mewes H.-W."/>
            <person name="Minenkova O."/>
            <person name="Mueller-Auer S."/>
            <person name="Nawrocki A."/>
            <person name="Netter P."/>
            <person name="Neu R."/>
            <person name="Nombela C."/>
            <person name="Oliver S.G."/>
            <person name="Panzeri L."/>
            <person name="Paoluzi S."/>
            <person name="Plevani P."/>
            <person name="Portetelle D."/>
            <person name="Portillo F."/>
            <person name="Potier S."/>
            <person name="Purnelle B."/>
            <person name="Rieger M."/>
            <person name="Riles L."/>
            <person name="Rinaldi T."/>
            <person name="Robben J."/>
            <person name="Rodrigues-Pousada C."/>
            <person name="Rodriguez-Belmonte E."/>
            <person name="Rodriguez-Torres A.M."/>
            <person name="Rose M."/>
            <person name="Ruzzi M."/>
            <person name="Saliola M."/>
            <person name="Sanchez-Perez M."/>
            <person name="Schaefer B."/>
            <person name="Schaefer M."/>
            <person name="Scharfe M."/>
            <person name="Schmidheini T."/>
            <person name="Schreer A."/>
            <person name="Skala J."/>
            <person name="Souciet J.-L."/>
            <person name="Steensma H.Y."/>
            <person name="Talla E."/>
            <person name="Thierry A."/>
            <person name="Vandenbol M."/>
            <person name="van der Aart Q.J.M."/>
            <person name="Van Dyck L."/>
            <person name="Vanoni M."/>
            <person name="Verhasselt P."/>
            <person name="Voet M."/>
            <person name="Volckaert G."/>
            <person name="Wambutt R."/>
            <person name="Watson M.D."/>
            <person name="Weber N."/>
            <person name="Wedler E."/>
            <person name="Wedler H."/>
            <person name="Wipfli P."/>
            <person name="Wolf K."/>
            <person name="Wright L.F."/>
            <person name="Zaccaria P."/>
            <person name="Zimmermann M."/>
            <person name="Zollner A."/>
            <person name="Kleine K."/>
        </authorList>
    </citation>
    <scope>NUCLEOTIDE SEQUENCE [LARGE SCALE GENOMIC DNA]</scope>
    <source>
        <strain>ATCC 204508 / S288c</strain>
    </source>
</reference>
<reference key="2">
    <citation type="journal article" date="2014" name="G3 (Bethesda)">
        <title>The reference genome sequence of Saccharomyces cerevisiae: Then and now.</title>
        <authorList>
            <person name="Engel S.R."/>
            <person name="Dietrich F.S."/>
            <person name="Fisk D.G."/>
            <person name="Binkley G."/>
            <person name="Balakrishnan R."/>
            <person name="Costanzo M.C."/>
            <person name="Dwight S.S."/>
            <person name="Hitz B.C."/>
            <person name="Karra K."/>
            <person name="Nash R.S."/>
            <person name="Weng S."/>
            <person name="Wong E.D."/>
            <person name="Lloyd P."/>
            <person name="Skrzypek M.S."/>
            <person name="Miyasato S.R."/>
            <person name="Simison M."/>
            <person name="Cherry J.M."/>
        </authorList>
    </citation>
    <scope>GENOME REANNOTATION</scope>
    <source>
        <strain>ATCC 204508 / S288c</strain>
    </source>
</reference>
<reference key="3">
    <citation type="journal article" date="2003" name="Protein Expr. Purif.">
        <title>Identification and characterization of a second NMN adenylyltransferase gene in Saccharomyces cerevisiae.</title>
        <authorList>
            <person name="Emanuelli M."/>
            <person name="Amici A."/>
            <person name="Carnevali F."/>
            <person name="Pierella F."/>
            <person name="Raffaelli N."/>
            <person name="Magni G."/>
        </authorList>
    </citation>
    <scope>PROTEIN SEQUENCE OF 1-15</scope>
    <scope>FUNCTION</scope>
    <scope>CATALYTIC ACTIVITY</scope>
    <scope>BIOPHYSICOCHEMICAL PROPERTIES</scope>
</reference>
<reference key="4">
    <citation type="journal article" date="2002" name="J. Biol. Chem.">
        <title>Manipulation of a nuclear NAD+ salvage pathway delays aging without altering steady-state NAD+ levels.</title>
        <authorList>
            <person name="Anderson R.M."/>
            <person name="Bitterman K.J."/>
            <person name="Wood J.G."/>
            <person name="Medvedik O."/>
            <person name="Cohen H."/>
            <person name="Lin S.S."/>
            <person name="Manchester J.K."/>
            <person name="Gordon J.I."/>
            <person name="Sinclair D.A."/>
        </authorList>
    </citation>
    <scope>FUNCTION</scope>
    <scope>SUBCELLULAR LOCATION</scope>
</reference>
<reference key="5">
    <citation type="journal article" date="2003" name="Nature">
        <title>Global analysis of protein expression in yeast.</title>
        <authorList>
            <person name="Ghaemmaghami S."/>
            <person name="Huh W.-K."/>
            <person name="Bower K."/>
            <person name="Howson R.W."/>
            <person name="Belle A."/>
            <person name="Dephoure N."/>
            <person name="O'Shea E.K."/>
            <person name="Weissman J.S."/>
        </authorList>
    </citation>
    <scope>LEVEL OF PROTEIN EXPRESSION [LARGE SCALE ANALYSIS]</scope>
</reference>
<reference key="6">
    <citation type="journal article" date="2007" name="J. Proteome Res.">
        <title>Large-scale phosphorylation analysis of alpha-factor-arrested Saccharomyces cerevisiae.</title>
        <authorList>
            <person name="Li X."/>
            <person name="Gerber S.A."/>
            <person name="Rudner A.D."/>
            <person name="Beausoleil S.A."/>
            <person name="Haas W."/>
            <person name="Villen J."/>
            <person name="Elias J.E."/>
            <person name="Gygi S.P."/>
        </authorList>
    </citation>
    <scope>PHOSPHORYLATION [LARGE SCALE ANALYSIS] AT SER-85</scope>
    <scope>IDENTIFICATION BY MASS SPECTROMETRY [LARGE SCALE ANALYSIS]</scope>
    <source>
        <strain>ADR376</strain>
    </source>
</reference>
<reference key="7">
    <citation type="journal article" date="2009" name="Science">
        <title>Global analysis of Cdk1 substrate phosphorylation sites provides insights into evolution.</title>
        <authorList>
            <person name="Holt L.J."/>
            <person name="Tuch B.B."/>
            <person name="Villen J."/>
            <person name="Johnson A.D."/>
            <person name="Gygi S.P."/>
            <person name="Morgan D.O."/>
        </authorList>
    </citation>
    <scope>PHOSPHORYLATION [LARGE SCALE ANALYSIS] AT SER-85; SER-89 AND SER-90</scope>
    <scope>IDENTIFICATION BY MASS SPECTROMETRY [LARGE SCALE ANALYSIS]</scope>
</reference>
<reference key="8">
    <citation type="journal article" date="2014" name="J. Biol. Chem.">
        <title>YCL047C/POF1 is a novel nicotinamide mononucleotide adenylyltransferase (NMNAT) in Saccharomyces cerevisiae.</title>
        <authorList>
            <person name="Kato M."/>
            <person name="Lin S.J."/>
        </authorList>
    </citation>
    <scope>INDUCTION</scope>
    <source>
        <strain>ATCC 201389 / BY4742</strain>
    </source>
</reference>
<gene>
    <name evidence="8" type="primary">NMA2</name>
    <name evidence="13" type="ordered locus">YGR010W</name>
</gene>
<organism>
    <name type="scientific">Saccharomyces cerevisiae (strain ATCC 204508 / S288c)</name>
    <name type="common">Baker's yeast</name>
    <dbReference type="NCBI Taxonomy" id="559292"/>
    <lineage>
        <taxon>Eukaryota</taxon>
        <taxon>Fungi</taxon>
        <taxon>Dikarya</taxon>
        <taxon>Ascomycota</taxon>
        <taxon>Saccharomycotina</taxon>
        <taxon>Saccharomycetes</taxon>
        <taxon>Saccharomycetales</taxon>
        <taxon>Saccharomycetaceae</taxon>
        <taxon>Saccharomyces</taxon>
    </lineage>
</organism>
<name>NMA2_YEAST</name>
<dbReference type="EC" id="2.7.7.1" evidence="5"/>
<dbReference type="EC" id="2.7.7.18" evidence="11"/>
<dbReference type="EMBL" id="Z72795">
    <property type="protein sequence ID" value="CAA96993.1"/>
    <property type="molecule type" value="Genomic_DNA"/>
</dbReference>
<dbReference type="EMBL" id="BK006941">
    <property type="protein sequence ID" value="DAA08108.1"/>
    <property type="molecule type" value="Genomic_DNA"/>
</dbReference>
<dbReference type="PIR" id="S64299">
    <property type="entry name" value="S64299"/>
</dbReference>
<dbReference type="RefSeq" id="NP_011524.1">
    <property type="nucleotide sequence ID" value="NM_001181139.1"/>
</dbReference>
<dbReference type="SMR" id="P53204"/>
<dbReference type="BioGRID" id="33254">
    <property type="interactions" value="71"/>
</dbReference>
<dbReference type="DIP" id="DIP-1227N"/>
<dbReference type="FunCoup" id="P53204">
    <property type="interactions" value="448"/>
</dbReference>
<dbReference type="IntAct" id="P53204">
    <property type="interactions" value="15"/>
</dbReference>
<dbReference type="MINT" id="P53204"/>
<dbReference type="STRING" id="4932.YGR010W"/>
<dbReference type="iPTMnet" id="P53204"/>
<dbReference type="PaxDb" id="4932-YGR010W"/>
<dbReference type="PeptideAtlas" id="P53204"/>
<dbReference type="EnsemblFungi" id="YGR010W_mRNA">
    <property type="protein sequence ID" value="YGR010W"/>
    <property type="gene ID" value="YGR010W"/>
</dbReference>
<dbReference type="GeneID" id="852893"/>
<dbReference type="KEGG" id="sce:YGR010W"/>
<dbReference type="AGR" id="SGD:S000003242"/>
<dbReference type="SGD" id="S000003242">
    <property type="gene designation" value="NMA2"/>
</dbReference>
<dbReference type="VEuPathDB" id="FungiDB:YGR010W"/>
<dbReference type="eggNOG" id="KOG3199">
    <property type="taxonomic scope" value="Eukaryota"/>
</dbReference>
<dbReference type="GeneTree" id="ENSGT00950000183179"/>
<dbReference type="HOGENOM" id="CLU_033366_5_0_1"/>
<dbReference type="InParanoid" id="P53204"/>
<dbReference type="OMA" id="HFDYELN"/>
<dbReference type="OrthoDB" id="422187at2759"/>
<dbReference type="BioCyc" id="MetaCyc:YGR010W-MONOMER"/>
<dbReference type="BioCyc" id="YEAST:YGR010W-MONOMER"/>
<dbReference type="BRENDA" id="2.7.7.1">
    <property type="organism ID" value="984"/>
</dbReference>
<dbReference type="BRENDA" id="2.7.7.18">
    <property type="organism ID" value="984"/>
</dbReference>
<dbReference type="Reactome" id="R-SCE-196807">
    <property type="pathway name" value="Nicotinate metabolism"/>
</dbReference>
<dbReference type="UniPathway" id="UPA00253">
    <property type="reaction ID" value="UER00332"/>
</dbReference>
<dbReference type="UniPathway" id="UPA00253">
    <property type="reaction ID" value="UER00600"/>
</dbReference>
<dbReference type="BioGRID-ORCS" id="852893">
    <property type="hits" value="8 hits in 10 CRISPR screens"/>
</dbReference>
<dbReference type="PRO" id="PR:P53204"/>
<dbReference type="Proteomes" id="UP000002311">
    <property type="component" value="Chromosome VII"/>
</dbReference>
<dbReference type="RNAct" id="P53204">
    <property type="molecule type" value="protein"/>
</dbReference>
<dbReference type="GO" id="GO:0005634">
    <property type="term" value="C:nucleus"/>
    <property type="evidence" value="ECO:0000314"/>
    <property type="project" value="SGD"/>
</dbReference>
<dbReference type="GO" id="GO:0005524">
    <property type="term" value="F:ATP binding"/>
    <property type="evidence" value="ECO:0007669"/>
    <property type="project" value="UniProtKB-KW"/>
</dbReference>
<dbReference type="GO" id="GO:0000309">
    <property type="term" value="F:nicotinamide-nucleotide adenylyltransferase activity"/>
    <property type="evidence" value="ECO:0000314"/>
    <property type="project" value="SGD"/>
</dbReference>
<dbReference type="GO" id="GO:0004515">
    <property type="term" value="F:nicotinate-nucleotide adenylyltransferase activity"/>
    <property type="evidence" value="ECO:0000318"/>
    <property type="project" value="GO_Central"/>
</dbReference>
<dbReference type="GO" id="GO:0009435">
    <property type="term" value="P:NAD biosynthetic process"/>
    <property type="evidence" value="ECO:0000314"/>
    <property type="project" value="SGD"/>
</dbReference>
<dbReference type="CDD" id="cd09286">
    <property type="entry name" value="NMNAT_Eukarya"/>
    <property type="match status" value="1"/>
</dbReference>
<dbReference type="FunFam" id="3.40.50.620:FF:000074">
    <property type="entry name" value="Nicotinamide-nucleotide adenylyltransferase"/>
    <property type="match status" value="1"/>
</dbReference>
<dbReference type="Gene3D" id="3.40.50.620">
    <property type="entry name" value="HUPs"/>
    <property type="match status" value="1"/>
</dbReference>
<dbReference type="InterPro" id="IPR004821">
    <property type="entry name" value="Cyt_trans-like"/>
</dbReference>
<dbReference type="InterPro" id="IPR051182">
    <property type="entry name" value="Euk_NMN_adenylyltrnsfrase"/>
</dbReference>
<dbReference type="InterPro" id="IPR005248">
    <property type="entry name" value="NadD/NMNAT"/>
</dbReference>
<dbReference type="InterPro" id="IPR045094">
    <property type="entry name" value="NMNAT_euk"/>
</dbReference>
<dbReference type="InterPro" id="IPR014729">
    <property type="entry name" value="Rossmann-like_a/b/a_fold"/>
</dbReference>
<dbReference type="NCBIfam" id="TIGR00482">
    <property type="entry name" value="nicotinate (nicotinamide) nucleotide adenylyltransferase"/>
    <property type="match status" value="1"/>
</dbReference>
<dbReference type="PANTHER" id="PTHR12039">
    <property type="entry name" value="NICOTINAMIDE MONONUCLEOTIDE ADENYLYLTRANSFERASE"/>
    <property type="match status" value="1"/>
</dbReference>
<dbReference type="PANTHER" id="PTHR12039:SF0">
    <property type="entry name" value="NICOTINAMIDE-NUCLEOTIDE ADENYLYLTRANSFERASE"/>
    <property type="match status" value="1"/>
</dbReference>
<dbReference type="Pfam" id="PF01467">
    <property type="entry name" value="CTP_transf_like"/>
    <property type="match status" value="1"/>
</dbReference>
<dbReference type="SUPFAM" id="SSF52374">
    <property type="entry name" value="Nucleotidylyl transferase"/>
    <property type="match status" value="1"/>
</dbReference>
<accession>P53204</accession>
<accession>D6VUE7</accession>